<proteinExistence type="inferred from homology"/>
<evidence type="ECO:0000255" key="1">
    <source>
        <dbReference type="HAMAP-Rule" id="MF_00044"/>
    </source>
</evidence>
<sequence length="586" mass="68344">MFKVIKCNELNEKLIDKKVEINAWVKKIRHHGKFIFLNIRDRYEKAQVLVNEEKLLKIAEKIKLEYCIKIQGLLIKRPPNMINANMKTGHFEILAKNIEIISKCNELPFMIEDDNNASENSKLEYRYLDLRRDSLKNKIILRCQATHLIRNFLIKRKFLELETPTFVKSTPEGARDFVIPSRIHKGSFYALPQSPQLYKQLIMIAGFDKYFQIARCYRDEDSRGDRQPEFTQLDLEMSFVKKENIFKLIENMLFLIFKNCININLPKKFKKITYKKAMNKYGSDKPDTRFELELQDISRNLKNSEFNIFKDTLKNKGSIKILIVKDKADKFSRAKINNLEEIAKLYKTQGLYFTKIENNKFSGGIAKFLKTEEQELIKTYSLENNDIIFFTANNNWETACKAMGQIRIKIANDLGLIDENKFEFLWVYDFPLFEYDENTKTYSPAHHMFSLPKKQYIANLEKNPKKTIGEIYDLVLNGVELGSGSIRIHNKELQQRIFKIIGFQKEKSEDRFGFFLKALEYGAPNHGGIAIGIDRLIMLMTKSTSIKDVILFPKNSFAASPLDNSPSKISNEQLKELGINIVDGDN</sequence>
<reference key="1">
    <citation type="journal article" date="1997" name="Nature">
        <title>Genomic sequence of a Lyme disease spirochaete, Borrelia burgdorferi.</title>
        <authorList>
            <person name="Fraser C.M."/>
            <person name="Casjens S."/>
            <person name="Huang W.M."/>
            <person name="Sutton G.G."/>
            <person name="Clayton R.A."/>
            <person name="Lathigra R."/>
            <person name="White O."/>
            <person name="Ketchum K.A."/>
            <person name="Dodson R.J."/>
            <person name="Hickey E.K."/>
            <person name="Gwinn M.L."/>
            <person name="Dougherty B.A."/>
            <person name="Tomb J.-F."/>
            <person name="Fleischmann R.D."/>
            <person name="Richardson D.L."/>
            <person name="Peterson J.D."/>
            <person name="Kerlavage A.R."/>
            <person name="Quackenbush J."/>
            <person name="Salzberg S.L."/>
            <person name="Hanson M."/>
            <person name="van Vugt R."/>
            <person name="Palmer N."/>
            <person name="Adams M.D."/>
            <person name="Gocayne J.D."/>
            <person name="Weidman J.F."/>
            <person name="Utterback T.R."/>
            <person name="Watthey L."/>
            <person name="McDonald L.A."/>
            <person name="Artiach P."/>
            <person name="Bowman C."/>
            <person name="Garland S.A."/>
            <person name="Fujii C."/>
            <person name="Cotton M.D."/>
            <person name="Horst K."/>
            <person name="Roberts K.M."/>
            <person name="Hatch B."/>
            <person name="Smith H.O."/>
            <person name="Venter J.C."/>
        </authorList>
    </citation>
    <scope>NUCLEOTIDE SEQUENCE [LARGE SCALE GENOMIC DNA]</scope>
    <source>
        <strain>ATCC 35210 / DSM 4680 / CIP 102532 / B31</strain>
    </source>
</reference>
<gene>
    <name evidence="1" type="primary">aspS</name>
    <name type="ordered locus">BB_0446</name>
</gene>
<protein>
    <recommendedName>
        <fullName evidence="1">Aspartate--tRNA(Asp/Asn) ligase</fullName>
        <ecNumber evidence="1">6.1.1.23</ecNumber>
    </recommendedName>
    <alternativeName>
        <fullName evidence="1">Aspartyl-tRNA synthetase</fullName>
        <shortName evidence="1">AspRS</shortName>
    </alternativeName>
    <alternativeName>
        <fullName evidence="1">Non-discriminating aspartyl-tRNA synthetase</fullName>
        <shortName evidence="1">ND-AspRS</shortName>
    </alternativeName>
</protein>
<accession>O51402</accession>
<dbReference type="EC" id="6.1.1.23" evidence="1"/>
<dbReference type="EMBL" id="AE000783">
    <property type="protein sequence ID" value="AAB91506.2"/>
    <property type="molecule type" value="Genomic_DNA"/>
</dbReference>
<dbReference type="PIR" id="E70155">
    <property type="entry name" value="E70155"/>
</dbReference>
<dbReference type="RefSeq" id="NP_212580.2">
    <property type="nucleotide sequence ID" value="NC_001318.1"/>
</dbReference>
<dbReference type="RefSeq" id="WP_002657924.1">
    <property type="nucleotide sequence ID" value="NC_001318.1"/>
</dbReference>
<dbReference type="SMR" id="O51402"/>
<dbReference type="STRING" id="224326.BB_0446"/>
<dbReference type="PaxDb" id="224326-BB_0446"/>
<dbReference type="EnsemblBacteria" id="AAB91506">
    <property type="protein sequence ID" value="AAB91506"/>
    <property type="gene ID" value="BB_0446"/>
</dbReference>
<dbReference type="GeneID" id="56567878"/>
<dbReference type="KEGG" id="bbu:BB_0446"/>
<dbReference type="PATRIC" id="fig|224326.49.peg.838"/>
<dbReference type="HOGENOM" id="CLU_014330_3_2_12"/>
<dbReference type="OrthoDB" id="9802326at2"/>
<dbReference type="Proteomes" id="UP000001807">
    <property type="component" value="Chromosome"/>
</dbReference>
<dbReference type="GO" id="GO:0005737">
    <property type="term" value="C:cytoplasm"/>
    <property type="evidence" value="ECO:0007669"/>
    <property type="project" value="UniProtKB-SubCell"/>
</dbReference>
<dbReference type="GO" id="GO:0004815">
    <property type="term" value="F:aspartate-tRNA ligase activity"/>
    <property type="evidence" value="ECO:0007669"/>
    <property type="project" value="UniProtKB-UniRule"/>
</dbReference>
<dbReference type="GO" id="GO:0050560">
    <property type="term" value="F:aspartate-tRNA(Asn) ligase activity"/>
    <property type="evidence" value="ECO:0007669"/>
    <property type="project" value="UniProtKB-EC"/>
</dbReference>
<dbReference type="GO" id="GO:0005524">
    <property type="term" value="F:ATP binding"/>
    <property type="evidence" value="ECO:0007669"/>
    <property type="project" value="UniProtKB-UniRule"/>
</dbReference>
<dbReference type="GO" id="GO:0003676">
    <property type="term" value="F:nucleic acid binding"/>
    <property type="evidence" value="ECO:0007669"/>
    <property type="project" value="InterPro"/>
</dbReference>
<dbReference type="GO" id="GO:0006422">
    <property type="term" value="P:aspartyl-tRNA aminoacylation"/>
    <property type="evidence" value="ECO:0007669"/>
    <property type="project" value="UniProtKB-UniRule"/>
</dbReference>
<dbReference type="CDD" id="cd00777">
    <property type="entry name" value="AspRS_core"/>
    <property type="match status" value="1"/>
</dbReference>
<dbReference type="CDD" id="cd04317">
    <property type="entry name" value="EcAspRS_like_N"/>
    <property type="match status" value="1"/>
</dbReference>
<dbReference type="Gene3D" id="3.30.930.10">
    <property type="entry name" value="Bira Bifunctional Protein, Domain 2"/>
    <property type="match status" value="1"/>
</dbReference>
<dbReference type="Gene3D" id="3.30.1360.30">
    <property type="entry name" value="GAD-like domain"/>
    <property type="match status" value="1"/>
</dbReference>
<dbReference type="Gene3D" id="2.40.50.140">
    <property type="entry name" value="Nucleic acid-binding proteins"/>
    <property type="match status" value="1"/>
</dbReference>
<dbReference type="HAMAP" id="MF_00044">
    <property type="entry name" value="Asp_tRNA_synth_type1"/>
    <property type="match status" value="1"/>
</dbReference>
<dbReference type="InterPro" id="IPR004364">
    <property type="entry name" value="Aa-tRNA-synt_II"/>
</dbReference>
<dbReference type="InterPro" id="IPR006195">
    <property type="entry name" value="aa-tRNA-synth_II"/>
</dbReference>
<dbReference type="InterPro" id="IPR045864">
    <property type="entry name" value="aa-tRNA-synth_II/BPL/LPL"/>
</dbReference>
<dbReference type="InterPro" id="IPR004524">
    <property type="entry name" value="Asp-tRNA-ligase_1"/>
</dbReference>
<dbReference type="InterPro" id="IPR047089">
    <property type="entry name" value="Asp-tRNA-ligase_1_N"/>
</dbReference>
<dbReference type="InterPro" id="IPR002312">
    <property type="entry name" value="Asp/Asn-tRNA-synth_IIb"/>
</dbReference>
<dbReference type="InterPro" id="IPR047090">
    <property type="entry name" value="AspRS_core"/>
</dbReference>
<dbReference type="InterPro" id="IPR004115">
    <property type="entry name" value="GAD-like_sf"/>
</dbReference>
<dbReference type="InterPro" id="IPR029351">
    <property type="entry name" value="GAD_dom"/>
</dbReference>
<dbReference type="InterPro" id="IPR012340">
    <property type="entry name" value="NA-bd_OB-fold"/>
</dbReference>
<dbReference type="InterPro" id="IPR004365">
    <property type="entry name" value="NA-bd_OB_tRNA"/>
</dbReference>
<dbReference type="NCBIfam" id="TIGR00459">
    <property type="entry name" value="aspS_bact"/>
    <property type="match status" value="1"/>
</dbReference>
<dbReference type="NCBIfam" id="NF001750">
    <property type="entry name" value="PRK00476.1"/>
    <property type="match status" value="1"/>
</dbReference>
<dbReference type="PANTHER" id="PTHR22594:SF5">
    <property type="entry name" value="ASPARTATE--TRNA LIGASE, MITOCHONDRIAL"/>
    <property type="match status" value="1"/>
</dbReference>
<dbReference type="PANTHER" id="PTHR22594">
    <property type="entry name" value="ASPARTYL/LYSYL-TRNA SYNTHETASE"/>
    <property type="match status" value="1"/>
</dbReference>
<dbReference type="Pfam" id="PF02938">
    <property type="entry name" value="GAD"/>
    <property type="match status" value="1"/>
</dbReference>
<dbReference type="Pfam" id="PF00152">
    <property type="entry name" value="tRNA-synt_2"/>
    <property type="match status" value="1"/>
</dbReference>
<dbReference type="Pfam" id="PF01336">
    <property type="entry name" value="tRNA_anti-codon"/>
    <property type="match status" value="1"/>
</dbReference>
<dbReference type="PRINTS" id="PR01042">
    <property type="entry name" value="TRNASYNTHASP"/>
</dbReference>
<dbReference type="SUPFAM" id="SSF55681">
    <property type="entry name" value="Class II aaRS and biotin synthetases"/>
    <property type="match status" value="1"/>
</dbReference>
<dbReference type="SUPFAM" id="SSF55261">
    <property type="entry name" value="GAD domain-like"/>
    <property type="match status" value="1"/>
</dbReference>
<dbReference type="SUPFAM" id="SSF50249">
    <property type="entry name" value="Nucleic acid-binding proteins"/>
    <property type="match status" value="1"/>
</dbReference>
<dbReference type="PROSITE" id="PS50862">
    <property type="entry name" value="AA_TRNA_LIGASE_II"/>
    <property type="match status" value="1"/>
</dbReference>
<comment type="function">
    <text evidence="1">Aspartyl-tRNA synthetase with relaxed tRNA specificity since it is able to aspartylate not only its cognate tRNA(Asp) but also tRNA(Asn). Reaction proceeds in two steps: L-aspartate is first activated by ATP to form Asp-AMP and then transferred to the acceptor end of tRNA(Asp/Asn).</text>
</comment>
<comment type="catalytic activity">
    <reaction evidence="1">
        <text>tRNA(Asx) + L-aspartate + ATP = L-aspartyl-tRNA(Asx) + AMP + diphosphate</text>
        <dbReference type="Rhea" id="RHEA:18349"/>
        <dbReference type="Rhea" id="RHEA-COMP:9710"/>
        <dbReference type="Rhea" id="RHEA-COMP:9711"/>
        <dbReference type="ChEBI" id="CHEBI:29991"/>
        <dbReference type="ChEBI" id="CHEBI:30616"/>
        <dbReference type="ChEBI" id="CHEBI:33019"/>
        <dbReference type="ChEBI" id="CHEBI:78442"/>
        <dbReference type="ChEBI" id="CHEBI:78516"/>
        <dbReference type="ChEBI" id="CHEBI:456215"/>
        <dbReference type="EC" id="6.1.1.23"/>
    </reaction>
</comment>
<comment type="subunit">
    <text evidence="1">Homodimer.</text>
</comment>
<comment type="subcellular location">
    <subcellularLocation>
        <location evidence="1">Cytoplasm</location>
    </subcellularLocation>
</comment>
<comment type="similarity">
    <text evidence="1">Belongs to the class-II aminoacyl-tRNA synthetase family. Type 1 subfamily.</text>
</comment>
<keyword id="KW-0030">Aminoacyl-tRNA synthetase</keyword>
<keyword id="KW-0067">ATP-binding</keyword>
<keyword id="KW-0963">Cytoplasm</keyword>
<keyword id="KW-0436">Ligase</keyword>
<keyword id="KW-0547">Nucleotide-binding</keyword>
<keyword id="KW-0648">Protein biosynthesis</keyword>
<keyword id="KW-1185">Reference proteome</keyword>
<name>SYDND_BORBU</name>
<organism>
    <name type="scientific">Borreliella burgdorferi (strain ATCC 35210 / DSM 4680 / CIP 102532 / B31)</name>
    <name type="common">Borrelia burgdorferi</name>
    <dbReference type="NCBI Taxonomy" id="224326"/>
    <lineage>
        <taxon>Bacteria</taxon>
        <taxon>Pseudomonadati</taxon>
        <taxon>Spirochaetota</taxon>
        <taxon>Spirochaetia</taxon>
        <taxon>Spirochaetales</taxon>
        <taxon>Borreliaceae</taxon>
        <taxon>Borreliella</taxon>
    </lineage>
</organism>
<feature type="chain" id="PRO_0000110836" description="Aspartate--tRNA(Asp/Asn) ligase">
    <location>
        <begin position="1"/>
        <end position="586"/>
    </location>
</feature>
<feature type="region of interest" description="Aspartate" evidence="1">
    <location>
        <begin position="196"/>
        <end position="199"/>
    </location>
</feature>
<feature type="binding site" evidence="1">
    <location>
        <position position="172"/>
    </location>
    <ligand>
        <name>L-aspartate</name>
        <dbReference type="ChEBI" id="CHEBI:29991"/>
    </ligand>
</feature>
<feature type="binding site" evidence="1">
    <location>
        <begin position="218"/>
        <end position="220"/>
    </location>
    <ligand>
        <name>ATP</name>
        <dbReference type="ChEBI" id="CHEBI:30616"/>
    </ligand>
</feature>
<feature type="binding site" evidence="1">
    <location>
        <position position="218"/>
    </location>
    <ligand>
        <name>L-aspartate</name>
        <dbReference type="ChEBI" id="CHEBI:29991"/>
    </ligand>
</feature>
<feature type="binding site" evidence="1">
    <location>
        <position position="227"/>
    </location>
    <ligand>
        <name>ATP</name>
        <dbReference type="ChEBI" id="CHEBI:30616"/>
    </ligand>
</feature>
<feature type="binding site" evidence="1">
    <location>
        <position position="446"/>
    </location>
    <ligand>
        <name>L-aspartate</name>
        <dbReference type="ChEBI" id="CHEBI:29991"/>
    </ligand>
</feature>
<feature type="binding site" evidence="1">
    <location>
        <position position="480"/>
    </location>
    <ligand>
        <name>ATP</name>
        <dbReference type="ChEBI" id="CHEBI:30616"/>
    </ligand>
</feature>
<feature type="binding site" evidence="1">
    <location>
        <position position="487"/>
    </location>
    <ligand>
        <name>L-aspartate</name>
        <dbReference type="ChEBI" id="CHEBI:29991"/>
    </ligand>
</feature>
<feature type="binding site" evidence="1">
    <location>
        <begin position="532"/>
        <end position="535"/>
    </location>
    <ligand>
        <name>ATP</name>
        <dbReference type="ChEBI" id="CHEBI:30616"/>
    </ligand>
</feature>
<feature type="site" description="Important for tRNA non-discrimination" evidence="1">
    <location>
        <position position="31"/>
    </location>
</feature>